<comment type="function">
    <text evidence="7 8">Plays a major role in the promotion of the transition of the vegetative meristem to reproductive development. Plays a role in the regulation of flowering time in the autonomous flowering pathway by decreasing FLOWERING LOCUS C mRNA levels. Required for RNA-mediated chromatin silencing of a range of loci in the genome. Cotranscriptionally recognizes aberrant RNA and marks it for silencing. Controls alternative cleavage and polyadenylation on pre-mRNAs and antisense RNAs. Acts redundantly with FPA to prevent the expression of distally polyadenylated antisense RNAs at the FLC locus.</text>
</comment>
<comment type="subunit">
    <text evidence="4 6">Interacts (via C-terminus) with SWI3B and (via WW domain) with FY (via PPLPP motifs).</text>
</comment>
<comment type="subcellular location">
    <subcellularLocation>
        <location evidence="5">Nucleus</location>
    </subcellularLocation>
</comment>
<comment type="alternative products">
    <event type="alternative splicing"/>
    <isoform>
        <id>O04425-1</id>
        <name>Gamma</name>
        <sequence type="displayed"/>
    </isoform>
    <isoform>
        <id>O04425-2</id>
        <name>Alpha</name>
        <sequence type="described" ref="VSP_005794"/>
    </isoform>
    <isoform>
        <id>O04425-3</id>
        <name>Beta</name>
        <sequence type="described" ref="VSP_005795 VSP_005796"/>
    </isoform>
    <isoform>
        <id>O04425-4</id>
        <name>Delta</name>
        <sequence type="described" ref="VSP_005797"/>
    </isoform>
</comment>
<comment type="tissue specificity">
    <text evidence="5">Constitutively expressed, but the negative feedback maintains the active isoform a low level throughout much of the plant, except in meristematic cells at a specific time in development.</text>
</comment>
<comment type="induction">
    <text evidence="5">Negative feedback mediated by FCA itself.</text>
</comment>
<comment type="domain">
    <text>The WW domain is required for autoregulation of FCA expression.</text>
</comment>
<comment type="miscellaneous">
    <text>While FCA requires both FY and FLD, FPA requires FLD but not FY to repress FLC.</text>
</comment>
<comment type="miscellaneous">
    <molecule>Isoform Gamma</molecule>
    <text>Encodes the active protein.</text>
</comment>
<keyword id="KW-0025">Alternative splicing</keyword>
<keyword id="KW-0217">Developmental protein</keyword>
<keyword id="KW-0221">Differentiation</keyword>
<keyword id="KW-0287">Flowering</keyword>
<keyword id="KW-0539">Nucleus</keyword>
<keyword id="KW-1185">Reference proteome</keyword>
<keyword id="KW-0677">Repeat</keyword>
<keyword id="KW-0694">RNA-binding</keyword>
<dbReference type="EMBL" id="Z82989">
    <property type="protein sequence ID" value="CAB05388.1"/>
    <property type="molecule type" value="mRNA"/>
</dbReference>
<dbReference type="EMBL" id="Z82990">
    <property type="protein sequence ID" value="CAB05389.1"/>
    <property type="molecule type" value="mRNA"/>
</dbReference>
<dbReference type="EMBL" id="Z82991">
    <property type="protein sequence ID" value="CAB05390.1"/>
    <property type="molecule type" value="mRNA"/>
</dbReference>
<dbReference type="EMBL" id="Z82992">
    <property type="protein sequence ID" value="CAB05391.1"/>
    <property type="molecule type" value="Genomic_DNA"/>
</dbReference>
<dbReference type="EMBL" id="Z82992">
    <property type="protein sequence ID" value="CAB05392.1"/>
    <property type="molecule type" value="Genomic_DNA"/>
</dbReference>
<dbReference type="EMBL" id="Z82992">
    <property type="protein sequence ID" value="CAB05393.1"/>
    <property type="molecule type" value="Genomic_DNA"/>
</dbReference>
<dbReference type="EMBL" id="Z82993">
    <property type="protein sequence ID" value="CAB05394.1"/>
    <property type="molecule type" value="mRNA"/>
</dbReference>
<dbReference type="EMBL" id="Z82993">
    <property type="protein sequence ID" value="CAB05395.1"/>
    <property type="molecule type" value="mRNA"/>
</dbReference>
<dbReference type="EMBL" id="Z97340">
    <property type="protein sequence ID" value="CAB10407.1"/>
    <property type="molecule type" value="Genomic_DNA"/>
</dbReference>
<dbReference type="EMBL" id="Z97340">
    <property type="protein sequence ID" value="CAB46035.1"/>
    <property type="molecule type" value="Genomic_DNA"/>
</dbReference>
<dbReference type="EMBL" id="Z97340">
    <property type="protein sequence ID" value="CAB46036.1"/>
    <property type="molecule type" value="Genomic_DNA"/>
</dbReference>
<dbReference type="EMBL" id="AL161543">
    <property type="protein sequence ID" value="CAB78670.1"/>
    <property type="molecule type" value="Genomic_DNA"/>
</dbReference>
<dbReference type="EMBL" id="AL161543">
    <property type="protein sequence ID" value="CAB78671.1"/>
    <property type="molecule type" value="Genomic_DNA"/>
</dbReference>
<dbReference type="EMBL" id="AL161543">
    <property type="protein sequence ID" value="CAB78672.1"/>
    <property type="molecule type" value="Genomic_DNA"/>
</dbReference>
<dbReference type="EMBL" id="CP002687">
    <property type="protein sequence ID" value="AEE83725.1"/>
    <property type="molecule type" value="Genomic_DNA"/>
</dbReference>
<dbReference type="EMBL" id="CP002687">
    <property type="protein sequence ID" value="AEE83726.1"/>
    <property type="molecule type" value="Genomic_DNA"/>
</dbReference>
<dbReference type="EMBL" id="CP002687">
    <property type="protein sequence ID" value="AEE83727.1"/>
    <property type="molecule type" value="Genomic_DNA"/>
</dbReference>
<dbReference type="PIR" id="A85181">
    <property type="entry name" value="A85181"/>
</dbReference>
<dbReference type="PIR" id="B85181">
    <property type="entry name" value="B85181"/>
</dbReference>
<dbReference type="PIR" id="E71429">
    <property type="entry name" value="E71429"/>
</dbReference>
<dbReference type="RefSeq" id="NP_001319956.1">
    <molecule id="O04425-1"/>
    <property type="nucleotide sequence ID" value="NM_001341092.1"/>
</dbReference>
<dbReference type="RefSeq" id="NP_193363.4">
    <molecule id="O04425-4"/>
    <property type="nucleotide sequence ID" value="NM_117725.3"/>
</dbReference>
<dbReference type="RefSeq" id="NP_849542.2">
    <molecule id="O04425-2"/>
    <property type="nucleotide sequence ID" value="NM_179211.3"/>
</dbReference>
<dbReference type="SMR" id="O04425"/>
<dbReference type="BioGRID" id="12617">
    <property type="interactions" value="7"/>
</dbReference>
<dbReference type="FunCoup" id="O04425">
    <property type="interactions" value="568"/>
</dbReference>
<dbReference type="IntAct" id="O04425">
    <property type="interactions" value="2"/>
</dbReference>
<dbReference type="STRING" id="3702.O04425"/>
<dbReference type="GlyGen" id="O04425">
    <property type="glycosylation" value="2 sites, 1 O-linked glycan (1 site)"/>
</dbReference>
<dbReference type="iPTMnet" id="O04425"/>
<dbReference type="PaxDb" id="3702-AT4G16280.2"/>
<dbReference type="ProteomicsDB" id="230709">
    <molecule id="O04425-1"/>
</dbReference>
<dbReference type="EnsemblPlants" id="AT4G16280.1">
    <molecule id="O04425-2"/>
    <property type="protein sequence ID" value="AT4G16280.1"/>
    <property type="gene ID" value="AT4G16280"/>
</dbReference>
<dbReference type="EnsemblPlants" id="AT4G16280.2">
    <molecule id="O04425-1"/>
    <property type="protein sequence ID" value="AT4G16280.2"/>
    <property type="gene ID" value="AT4G16280"/>
</dbReference>
<dbReference type="EnsemblPlants" id="AT4G16280.3">
    <molecule id="O04425-4"/>
    <property type="protein sequence ID" value="AT4G16280.3"/>
    <property type="gene ID" value="AT4G16280"/>
</dbReference>
<dbReference type="GeneID" id="827323"/>
<dbReference type="Gramene" id="AT4G16280.1">
    <molecule id="O04425-2"/>
    <property type="protein sequence ID" value="AT4G16280.1"/>
    <property type="gene ID" value="AT4G16280"/>
</dbReference>
<dbReference type="Gramene" id="AT4G16280.2">
    <molecule id="O04425-1"/>
    <property type="protein sequence ID" value="AT4G16280.2"/>
    <property type="gene ID" value="AT4G16280"/>
</dbReference>
<dbReference type="Gramene" id="AT4G16280.3">
    <molecule id="O04425-4"/>
    <property type="protein sequence ID" value="AT4G16280.3"/>
    <property type="gene ID" value="AT4G16280"/>
</dbReference>
<dbReference type="KEGG" id="ath:AT4G16280"/>
<dbReference type="Araport" id="AT4G16280"/>
<dbReference type="TAIR" id="AT4G16280">
    <property type="gene designation" value="FCA"/>
</dbReference>
<dbReference type="eggNOG" id="KOG0144">
    <property type="taxonomic scope" value="Eukaryota"/>
</dbReference>
<dbReference type="InParanoid" id="O04425"/>
<dbReference type="OMA" id="PMGGDGF"/>
<dbReference type="CD-CODE" id="6838ABCD">
    <property type="entry name" value="Synthetic Condensate 000303"/>
</dbReference>
<dbReference type="PRO" id="PR:O04425"/>
<dbReference type="Proteomes" id="UP000006548">
    <property type="component" value="Chromosome 4"/>
</dbReference>
<dbReference type="ExpressionAtlas" id="O04425">
    <property type="expression patterns" value="baseline and differential"/>
</dbReference>
<dbReference type="GO" id="GO:0005634">
    <property type="term" value="C:nucleus"/>
    <property type="evidence" value="ECO:0007669"/>
    <property type="project" value="UniProtKB-SubCell"/>
</dbReference>
<dbReference type="GO" id="GO:0003723">
    <property type="term" value="F:RNA binding"/>
    <property type="evidence" value="ECO:0007669"/>
    <property type="project" value="UniProtKB-KW"/>
</dbReference>
<dbReference type="GO" id="GO:0030154">
    <property type="term" value="P:cell differentiation"/>
    <property type="evidence" value="ECO:0007669"/>
    <property type="project" value="UniProtKB-KW"/>
</dbReference>
<dbReference type="GO" id="GO:0009908">
    <property type="term" value="P:flower development"/>
    <property type="evidence" value="ECO:0007669"/>
    <property type="project" value="UniProtKB-KW"/>
</dbReference>
<dbReference type="CDD" id="cd12633">
    <property type="entry name" value="RRM1_FCA"/>
    <property type="match status" value="1"/>
</dbReference>
<dbReference type="CDD" id="cd12637">
    <property type="entry name" value="RRM2_FCA"/>
    <property type="match status" value="1"/>
</dbReference>
<dbReference type="CDD" id="cd00201">
    <property type="entry name" value="WW"/>
    <property type="match status" value="1"/>
</dbReference>
<dbReference type="FunFam" id="3.30.70.330:FF:000374">
    <property type="entry name" value="Flowering time control protein FCA"/>
    <property type="match status" value="1"/>
</dbReference>
<dbReference type="FunFam" id="2.20.70.10:FF:000091">
    <property type="entry name" value="Flowering time control protein FCA isoform A"/>
    <property type="match status" value="1"/>
</dbReference>
<dbReference type="FunFam" id="3.30.70.330:FF:000332">
    <property type="entry name" value="flowering time control protein FCA isoform X2"/>
    <property type="match status" value="1"/>
</dbReference>
<dbReference type="Gene3D" id="2.20.70.10">
    <property type="match status" value="1"/>
</dbReference>
<dbReference type="Gene3D" id="3.30.70.330">
    <property type="match status" value="2"/>
</dbReference>
<dbReference type="InterPro" id="IPR012677">
    <property type="entry name" value="Nucleotide-bd_a/b_plait_sf"/>
</dbReference>
<dbReference type="InterPro" id="IPR035979">
    <property type="entry name" value="RBD_domain_sf"/>
</dbReference>
<dbReference type="InterPro" id="IPR047193">
    <property type="entry name" value="RRM1_FCA"/>
</dbReference>
<dbReference type="InterPro" id="IPR000504">
    <property type="entry name" value="RRM_dom"/>
</dbReference>
<dbReference type="InterPro" id="IPR001202">
    <property type="entry name" value="WW_dom"/>
</dbReference>
<dbReference type="InterPro" id="IPR036020">
    <property type="entry name" value="WW_dom_sf"/>
</dbReference>
<dbReference type="PANTHER" id="PTHR24012">
    <property type="entry name" value="RNA BINDING PROTEIN"/>
    <property type="match status" value="1"/>
</dbReference>
<dbReference type="Pfam" id="PF00076">
    <property type="entry name" value="RRM_1"/>
    <property type="match status" value="2"/>
</dbReference>
<dbReference type="Pfam" id="PF00397">
    <property type="entry name" value="WW"/>
    <property type="match status" value="1"/>
</dbReference>
<dbReference type="SMART" id="SM00360">
    <property type="entry name" value="RRM"/>
    <property type="match status" value="2"/>
</dbReference>
<dbReference type="SMART" id="SM00456">
    <property type="entry name" value="WW"/>
    <property type="match status" value="1"/>
</dbReference>
<dbReference type="SUPFAM" id="SSF54928">
    <property type="entry name" value="RNA-binding domain, RBD"/>
    <property type="match status" value="2"/>
</dbReference>
<dbReference type="SUPFAM" id="SSF51045">
    <property type="entry name" value="WW domain"/>
    <property type="match status" value="1"/>
</dbReference>
<dbReference type="PROSITE" id="PS50102">
    <property type="entry name" value="RRM"/>
    <property type="match status" value="2"/>
</dbReference>
<dbReference type="PROSITE" id="PS50020">
    <property type="entry name" value="WW_DOMAIN_2"/>
    <property type="match status" value="1"/>
</dbReference>
<protein>
    <recommendedName>
        <fullName>Flowering time control protein FCA</fullName>
    </recommendedName>
</protein>
<sequence length="747" mass="81706">MNGPPDRVDFKPMGPHHGGSFRPMGFAYDDGFRPMGPNGGVGGEGTRSIVGARYNYPAKYPPSESPDRRRFIGKAMESDYSVRPTTPPVQQPLSGQKRGYPISDHGSFTGTDVSDRSSTVKLFVGSVPRTATEEEIRPYFEQHGNVLEVALIKDKRTGQQQGCCFVKYATSKDADRAIRALHNQITLPGGTGPVQVRYADGERERIGTLEFKLFVGSLNKQATEKEVEEIFLQFGHVEDVYLMRDEYRQSRGCGFVKYSSKETAMAAIDGLNGTYTMRGCNQPLIVRFAEPKRPKPGESREMAPPVGLGSGPRFQASGPRPTSNFGDSSGDVSHTNPWRPATSRNVGPPSNTGIRGAGSDFSPKPGQATLPSNQGGPLGGYGVPPLNPLPVPGVSSSATLQQQNRAAGQHITPLKKPLHSPQGLPLPLRPQTNFPGAQAPLQNPYAYSSQLPTSQLPPQQNISRATAPQTPLNINLRPTTVSSATVQFPPRSQQQPLQKMQHPPSELAQLLSQQTQSLQATFQSSQQAISQLQQQVQSMQQPNQNLPLSQNGRAGKQQWAGSAIPRVASTTGSTPVSYVQTAAPAVSQSVGSVKCTWTEHTSPDGFKYYYNGLTGESKWEKPEEMIVFEREQQKQQQHQEKPTIQQSQTQLQPLQQQPQQVQQQYQGQQLQQPFYSSLYPTPGASHNTQYPSLPVGQNSQFPMSGIGQNAQDYARTHIPVGAASMNDISRTQQSRQSPQELMWKNKA</sequence>
<organism>
    <name type="scientific">Arabidopsis thaliana</name>
    <name type="common">Mouse-ear cress</name>
    <dbReference type="NCBI Taxonomy" id="3702"/>
    <lineage>
        <taxon>Eukaryota</taxon>
        <taxon>Viridiplantae</taxon>
        <taxon>Streptophyta</taxon>
        <taxon>Embryophyta</taxon>
        <taxon>Tracheophyta</taxon>
        <taxon>Spermatophyta</taxon>
        <taxon>Magnoliopsida</taxon>
        <taxon>eudicotyledons</taxon>
        <taxon>Gunneridae</taxon>
        <taxon>Pentapetalae</taxon>
        <taxon>rosids</taxon>
        <taxon>malvids</taxon>
        <taxon>Brassicales</taxon>
        <taxon>Brassicaceae</taxon>
        <taxon>Camelineae</taxon>
        <taxon>Arabidopsis</taxon>
    </lineage>
</organism>
<proteinExistence type="evidence at protein level"/>
<reference key="1">
    <citation type="journal article" date="1997" name="Cell">
        <title>FCA, a gene controlling flowering time in Arabidopsis, encodes a protein containing RNA-binding domains.</title>
        <authorList>
            <person name="Macknight R."/>
            <person name="Bancroft I."/>
            <person name="Page T."/>
            <person name="Lister C."/>
            <person name="Schmidt R."/>
            <person name="Love K."/>
            <person name="Westphal L."/>
            <person name="Murphy G."/>
            <person name="Sherson S."/>
            <person name="Cobbett C."/>
            <person name="Dean C."/>
        </authorList>
    </citation>
    <scope>NUCLEOTIDE SEQUENCE [GENOMIC DNA / MRNA]</scope>
    <scope>ALTERNATIVE SPLICING</scope>
    <source>
        <strain>cv. Landsberg erecta</strain>
    </source>
</reference>
<reference key="2">
    <citation type="journal article" date="1998" name="Nature">
        <title>Analysis of 1.9 Mb of contiguous sequence from chromosome 4 of Arabidopsis thaliana.</title>
        <authorList>
            <person name="Bevan M."/>
            <person name="Bancroft I."/>
            <person name="Bent E."/>
            <person name="Love K."/>
            <person name="Goodman H.M."/>
            <person name="Dean C."/>
            <person name="Bergkamp R."/>
            <person name="Dirkse W."/>
            <person name="van Staveren M."/>
            <person name="Stiekema W."/>
            <person name="Drost L."/>
            <person name="Ridley P."/>
            <person name="Hudson S.-A."/>
            <person name="Patel K."/>
            <person name="Murphy G."/>
            <person name="Piffanelli P."/>
            <person name="Wedler H."/>
            <person name="Wedler E."/>
            <person name="Wambutt R."/>
            <person name="Weitzenegger T."/>
            <person name="Pohl T."/>
            <person name="Terryn N."/>
            <person name="Gielen J."/>
            <person name="Villarroel R."/>
            <person name="De Clercq R."/>
            <person name="van Montagu M."/>
            <person name="Lecharny A."/>
            <person name="Aubourg S."/>
            <person name="Gy I."/>
            <person name="Kreis M."/>
            <person name="Lao N."/>
            <person name="Kavanagh T."/>
            <person name="Hempel S."/>
            <person name="Kotter P."/>
            <person name="Entian K.-D."/>
            <person name="Rieger M."/>
            <person name="Schaefer M."/>
            <person name="Funk B."/>
            <person name="Mueller-Auer S."/>
            <person name="Silvey M."/>
            <person name="James R."/>
            <person name="Monfort A."/>
            <person name="Pons A."/>
            <person name="Puigdomenech P."/>
            <person name="Douka A."/>
            <person name="Voukelatou E."/>
            <person name="Milioni D."/>
            <person name="Hatzopoulos P."/>
            <person name="Piravandi E."/>
            <person name="Obermaier B."/>
            <person name="Hilbert H."/>
            <person name="Duesterhoeft A."/>
            <person name="Moores T."/>
            <person name="Jones J.D.G."/>
            <person name="Eneva T."/>
            <person name="Palme K."/>
            <person name="Benes V."/>
            <person name="Rechmann S."/>
            <person name="Ansorge W."/>
            <person name="Cooke R."/>
            <person name="Berger C."/>
            <person name="Delseny M."/>
            <person name="Voet M."/>
            <person name="Volckaert G."/>
            <person name="Mewes H.-W."/>
            <person name="Klosterman S."/>
            <person name="Schueller C."/>
            <person name="Chalwatzis N."/>
        </authorList>
    </citation>
    <scope>NUCLEOTIDE SEQUENCE [LARGE SCALE GENOMIC DNA]</scope>
    <source>
        <strain>cv. Columbia</strain>
    </source>
</reference>
<reference key="3">
    <citation type="journal article" date="1999" name="Nature">
        <title>Sequence and analysis of chromosome 4 of the plant Arabidopsis thaliana.</title>
        <authorList>
            <person name="Mayer K.F.X."/>
            <person name="Schueller C."/>
            <person name="Wambutt R."/>
            <person name="Murphy G."/>
            <person name="Volckaert G."/>
            <person name="Pohl T."/>
            <person name="Duesterhoeft A."/>
            <person name="Stiekema W."/>
            <person name="Entian K.-D."/>
            <person name="Terryn N."/>
            <person name="Harris B."/>
            <person name="Ansorge W."/>
            <person name="Brandt P."/>
            <person name="Grivell L.A."/>
            <person name="Rieger M."/>
            <person name="Weichselgartner M."/>
            <person name="de Simone V."/>
            <person name="Obermaier B."/>
            <person name="Mache R."/>
            <person name="Mueller M."/>
            <person name="Kreis M."/>
            <person name="Delseny M."/>
            <person name="Puigdomenech P."/>
            <person name="Watson M."/>
            <person name="Schmidtheini T."/>
            <person name="Reichert B."/>
            <person name="Portetelle D."/>
            <person name="Perez-Alonso M."/>
            <person name="Boutry M."/>
            <person name="Bancroft I."/>
            <person name="Vos P."/>
            <person name="Hoheisel J."/>
            <person name="Zimmermann W."/>
            <person name="Wedler H."/>
            <person name="Ridley P."/>
            <person name="Langham S.-A."/>
            <person name="McCullagh B."/>
            <person name="Bilham L."/>
            <person name="Robben J."/>
            <person name="van der Schueren J."/>
            <person name="Grymonprez B."/>
            <person name="Chuang Y.-J."/>
            <person name="Vandenbussche F."/>
            <person name="Braeken M."/>
            <person name="Weltjens I."/>
            <person name="Voet M."/>
            <person name="Bastiaens I."/>
            <person name="Aert R."/>
            <person name="Defoor E."/>
            <person name="Weitzenegger T."/>
            <person name="Bothe G."/>
            <person name="Ramsperger U."/>
            <person name="Hilbert H."/>
            <person name="Braun M."/>
            <person name="Holzer E."/>
            <person name="Brandt A."/>
            <person name="Peters S."/>
            <person name="van Staveren M."/>
            <person name="Dirkse W."/>
            <person name="Mooijman P."/>
            <person name="Klein Lankhorst R."/>
            <person name="Rose M."/>
            <person name="Hauf J."/>
            <person name="Koetter P."/>
            <person name="Berneiser S."/>
            <person name="Hempel S."/>
            <person name="Feldpausch M."/>
            <person name="Lamberth S."/>
            <person name="Van den Daele H."/>
            <person name="De Keyser A."/>
            <person name="Buysshaert C."/>
            <person name="Gielen J."/>
            <person name="Villarroel R."/>
            <person name="De Clercq R."/>
            <person name="van Montagu M."/>
            <person name="Rogers J."/>
            <person name="Cronin A."/>
            <person name="Quail M.A."/>
            <person name="Bray-Allen S."/>
            <person name="Clark L."/>
            <person name="Doggett J."/>
            <person name="Hall S."/>
            <person name="Kay M."/>
            <person name="Lennard N."/>
            <person name="McLay K."/>
            <person name="Mayes R."/>
            <person name="Pettett A."/>
            <person name="Rajandream M.A."/>
            <person name="Lyne M."/>
            <person name="Benes V."/>
            <person name="Rechmann S."/>
            <person name="Borkova D."/>
            <person name="Bloecker H."/>
            <person name="Scharfe M."/>
            <person name="Grimm M."/>
            <person name="Loehnert T.-H."/>
            <person name="Dose S."/>
            <person name="de Haan M."/>
            <person name="Maarse A.C."/>
            <person name="Schaefer M."/>
            <person name="Mueller-Auer S."/>
            <person name="Gabel C."/>
            <person name="Fuchs M."/>
            <person name="Fartmann B."/>
            <person name="Granderath K."/>
            <person name="Dauner D."/>
            <person name="Herzl A."/>
            <person name="Neumann S."/>
            <person name="Argiriou A."/>
            <person name="Vitale D."/>
            <person name="Liguori R."/>
            <person name="Piravandi E."/>
            <person name="Massenet O."/>
            <person name="Quigley F."/>
            <person name="Clabauld G."/>
            <person name="Muendlein A."/>
            <person name="Felber R."/>
            <person name="Schnabl S."/>
            <person name="Hiller R."/>
            <person name="Schmidt W."/>
            <person name="Lecharny A."/>
            <person name="Aubourg S."/>
            <person name="Chefdor F."/>
            <person name="Cooke R."/>
            <person name="Berger C."/>
            <person name="Monfort A."/>
            <person name="Casacuberta E."/>
            <person name="Gibbons T."/>
            <person name="Weber N."/>
            <person name="Vandenbol M."/>
            <person name="Bargues M."/>
            <person name="Terol J."/>
            <person name="Torres A."/>
            <person name="Perez-Perez A."/>
            <person name="Purnelle B."/>
            <person name="Bent E."/>
            <person name="Johnson S."/>
            <person name="Tacon D."/>
            <person name="Jesse T."/>
            <person name="Heijnen L."/>
            <person name="Schwarz S."/>
            <person name="Scholler P."/>
            <person name="Heber S."/>
            <person name="Francs P."/>
            <person name="Bielke C."/>
            <person name="Frishman D."/>
            <person name="Haase D."/>
            <person name="Lemcke K."/>
            <person name="Mewes H.-W."/>
            <person name="Stocker S."/>
            <person name="Zaccaria P."/>
            <person name="Bevan M."/>
            <person name="Wilson R.K."/>
            <person name="de la Bastide M."/>
            <person name="Habermann K."/>
            <person name="Parnell L."/>
            <person name="Dedhia N."/>
            <person name="Gnoj L."/>
            <person name="Schutz K."/>
            <person name="Huang E."/>
            <person name="Spiegel L."/>
            <person name="Sekhon M."/>
            <person name="Murray J."/>
            <person name="Sheet P."/>
            <person name="Cordes M."/>
            <person name="Abu-Threideh J."/>
            <person name="Stoneking T."/>
            <person name="Kalicki J."/>
            <person name="Graves T."/>
            <person name="Harmon G."/>
            <person name="Edwards J."/>
            <person name="Latreille P."/>
            <person name="Courtney L."/>
            <person name="Cloud J."/>
            <person name="Abbott A."/>
            <person name="Scott K."/>
            <person name="Johnson D."/>
            <person name="Minx P."/>
            <person name="Bentley D."/>
            <person name="Fulton B."/>
            <person name="Miller N."/>
            <person name="Greco T."/>
            <person name="Kemp K."/>
            <person name="Kramer J."/>
            <person name="Fulton L."/>
            <person name="Mardis E."/>
            <person name="Dante M."/>
            <person name="Pepin K."/>
            <person name="Hillier L.W."/>
            <person name="Nelson J."/>
            <person name="Spieth J."/>
            <person name="Ryan E."/>
            <person name="Andrews S."/>
            <person name="Geisel C."/>
            <person name="Layman D."/>
            <person name="Du H."/>
            <person name="Ali J."/>
            <person name="Berghoff A."/>
            <person name="Jones K."/>
            <person name="Drone K."/>
            <person name="Cotton M."/>
            <person name="Joshu C."/>
            <person name="Antonoiu B."/>
            <person name="Zidanic M."/>
            <person name="Strong C."/>
            <person name="Sun H."/>
            <person name="Lamar B."/>
            <person name="Yordan C."/>
            <person name="Ma P."/>
            <person name="Zhong J."/>
            <person name="Preston R."/>
            <person name="Vil D."/>
            <person name="Shekher M."/>
            <person name="Matero A."/>
            <person name="Shah R."/>
            <person name="Swaby I.K."/>
            <person name="O'Shaughnessy A."/>
            <person name="Rodriguez M."/>
            <person name="Hoffman J."/>
            <person name="Till S."/>
            <person name="Granat S."/>
            <person name="Shohdy N."/>
            <person name="Hasegawa A."/>
            <person name="Hameed A."/>
            <person name="Lodhi M."/>
            <person name="Johnson A."/>
            <person name="Chen E."/>
            <person name="Marra M.A."/>
            <person name="Martienssen R."/>
            <person name="McCombie W.R."/>
        </authorList>
    </citation>
    <scope>NUCLEOTIDE SEQUENCE [LARGE SCALE GENOMIC DNA]</scope>
    <source>
        <strain>cv. Columbia</strain>
    </source>
</reference>
<reference key="4">
    <citation type="journal article" date="2017" name="Plant J.">
        <title>Araport11: a complete reannotation of the Arabidopsis thaliana reference genome.</title>
        <authorList>
            <person name="Cheng C.Y."/>
            <person name="Krishnakumar V."/>
            <person name="Chan A.P."/>
            <person name="Thibaud-Nissen F."/>
            <person name="Schobel S."/>
            <person name="Town C.D."/>
        </authorList>
    </citation>
    <scope>GENOME REANNOTATION</scope>
    <source>
        <strain>cv. Columbia</strain>
    </source>
</reference>
<reference key="5">
    <citation type="journal article" date="2002" name="Nucleic Acids Res.">
        <title>AtSWI3B, an Arabidopsis homolog of SWI3, a core subunit of yeast Swi/Snf chromatin remodeling complex, interacts with FCA, a regulator of flowering time.</title>
        <authorList>
            <person name="Sarnowski T.J."/>
            <person name="Swiezewski S."/>
            <person name="Pawlikowska K."/>
            <person name="Kaczanowski S."/>
            <person name="Jerzmanowski A."/>
        </authorList>
    </citation>
    <scope>INTERACTION WITH SWI3B</scope>
</reference>
<reference key="6">
    <citation type="journal article" date="2003" name="Cell">
        <title>FY is an RNA 3' end-processing factor that interacts with FCA to control the Arabidopsis floral transition.</title>
        <authorList>
            <person name="Simpson G.G."/>
            <person name="Dijkwel P.P."/>
            <person name="Quesada V."/>
            <person name="Henderson I."/>
            <person name="Dean C."/>
        </authorList>
    </citation>
    <scope>INTERACTION WITH FY</scope>
    <scope>MUTAGENESIS OF TRP-619</scope>
</reference>
<reference key="7">
    <citation type="journal article" date="2003" name="EMBO J.">
        <title>Autoregulation of FCA pre-mRNA processing controls Arabidopsis flowering time.</title>
        <authorList>
            <person name="Quesada V."/>
            <person name="Macknight R."/>
            <person name="Dean C."/>
            <person name="Simpson G.G."/>
        </authorList>
    </citation>
    <scope>INDUCTION BY ITSELF</scope>
    <scope>TISSUE SPECIFICITY</scope>
    <scope>SUBCELLULAR LOCATION</scope>
</reference>
<reference key="8">
    <citation type="journal article" date="2007" name="Science">
        <title>Widespread role for the flowering-time regulators FCA and FPA in RNA-mediated chromatin silencing.</title>
        <authorList>
            <person name="Baurle I."/>
            <person name="Smith L."/>
            <person name="Baulcombe D.C."/>
            <person name="Dean C."/>
        </authorList>
    </citation>
    <scope>FUNCTION</scope>
</reference>
<reference key="9">
    <citation type="journal article" date="2010" name="Dev. Cell">
        <title>The spen family protein FPA controls alternative cleavage and polyadenylation of RNA.</title>
        <authorList>
            <person name="Hornyik C."/>
            <person name="Terzi L.C."/>
            <person name="Simpson G.G."/>
        </authorList>
    </citation>
    <scope>FUNCTION</scope>
</reference>
<evidence type="ECO:0000255" key="1">
    <source>
        <dbReference type="PROSITE-ProRule" id="PRU00176"/>
    </source>
</evidence>
<evidence type="ECO:0000255" key="2">
    <source>
        <dbReference type="PROSITE-ProRule" id="PRU00224"/>
    </source>
</evidence>
<evidence type="ECO:0000256" key="3">
    <source>
        <dbReference type="SAM" id="MobiDB-lite"/>
    </source>
</evidence>
<evidence type="ECO:0000269" key="4">
    <source>
    </source>
</evidence>
<evidence type="ECO:0000269" key="5">
    <source>
    </source>
</evidence>
<evidence type="ECO:0000269" key="6">
    <source>
    </source>
</evidence>
<evidence type="ECO:0000269" key="7">
    <source>
    </source>
</evidence>
<evidence type="ECO:0000269" key="8">
    <source>
    </source>
</evidence>
<evidence type="ECO:0000305" key="9"/>
<name>FCA_ARATH</name>
<gene>
    <name type="primary">FCA</name>
    <name type="ordered locus">At4g16280</name>
    <name type="ORF">dl4180c</name>
    <name type="ORF">dl4181c</name>
    <name type="ORF">dl4182c</name>
    <name type="ORF">FCAALL.331</name>
</gene>
<feature type="chain" id="PRO_0000081588" description="Flowering time control protein FCA">
    <location>
        <begin position="1"/>
        <end position="747"/>
    </location>
</feature>
<feature type="domain" description="RRM 1" evidence="1">
    <location>
        <begin position="120"/>
        <end position="201"/>
    </location>
</feature>
<feature type="domain" description="RRM 2" evidence="1">
    <location>
        <begin position="211"/>
        <end position="291"/>
    </location>
</feature>
<feature type="domain" description="WW" evidence="2">
    <location>
        <begin position="591"/>
        <end position="624"/>
    </location>
</feature>
<feature type="region of interest" description="Disordered" evidence="3">
    <location>
        <begin position="80"/>
        <end position="101"/>
    </location>
</feature>
<feature type="region of interest" description="Disordered" evidence="3">
    <location>
        <begin position="291"/>
        <end position="503"/>
    </location>
</feature>
<feature type="region of interest" description="Disordered" evidence="3">
    <location>
        <begin position="630"/>
        <end position="707"/>
    </location>
</feature>
<feature type="region of interest" description="Disordered" evidence="3">
    <location>
        <begin position="722"/>
        <end position="747"/>
    </location>
</feature>
<feature type="compositionally biased region" description="Basic and acidic residues" evidence="3">
    <location>
        <begin position="291"/>
        <end position="301"/>
    </location>
</feature>
<feature type="compositionally biased region" description="Polar residues" evidence="3">
    <location>
        <begin position="320"/>
        <end position="353"/>
    </location>
</feature>
<feature type="compositionally biased region" description="Polar residues" evidence="3">
    <location>
        <begin position="395"/>
        <end position="406"/>
    </location>
</feature>
<feature type="compositionally biased region" description="Low complexity" evidence="3">
    <location>
        <begin position="448"/>
        <end position="460"/>
    </location>
</feature>
<feature type="compositionally biased region" description="Polar residues" evidence="3">
    <location>
        <begin position="461"/>
        <end position="498"/>
    </location>
</feature>
<feature type="compositionally biased region" description="Basic and acidic residues" evidence="3">
    <location>
        <begin position="630"/>
        <end position="641"/>
    </location>
</feature>
<feature type="compositionally biased region" description="Low complexity" evidence="3">
    <location>
        <begin position="642"/>
        <end position="673"/>
    </location>
</feature>
<feature type="compositionally biased region" description="Polar residues" evidence="3">
    <location>
        <begin position="674"/>
        <end position="707"/>
    </location>
</feature>
<feature type="compositionally biased region" description="Polar residues" evidence="3">
    <location>
        <begin position="726"/>
        <end position="739"/>
    </location>
</feature>
<feature type="splice variant" id="VSP_005794" description="In isoform Alpha." evidence="9">
    <location>
        <begin position="1"/>
        <end position="242"/>
    </location>
</feature>
<feature type="splice variant" id="VSP_005795" description="In isoform Beta." evidence="9">
    <original>CCFVKYATSKDADRAIRALHNQITLPGGTGPVQVRYADGERERIGTLEFKLFVGSLNKQATEKEVEEIFLQFGHVEDVYLMRDEYRQSRGCGFVKYSSKETAMAAIDG</original>
    <variation>MSISILLGNSRELYFLKFQVSLKRLMGSNPSLIIGLQLFATIFGLIAYACQRLICVRFCHRRRLPVLRKGLCTYVGQIDFATCVYSRTLDVFEKCRIY</variation>
    <location>
        <begin position="163"/>
        <end position="270"/>
    </location>
</feature>
<feature type="splice variant" id="VSP_005796" description="In isoform Beta." evidence="9">
    <location>
        <begin position="271"/>
        <end position="747"/>
    </location>
</feature>
<feature type="splice variant" id="VSP_005797" description="In isoform Delta." evidence="9">
    <location>
        <begin position="534"/>
        <end position="747"/>
    </location>
</feature>
<feature type="mutagenesis site" description="Loss of feedback autoregulation." evidence="6">
    <original>W</original>
    <variation>F</variation>
    <location>
        <position position="619"/>
    </location>
</feature>
<feature type="sequence conflict" description="In Ref. 1; CAB05388." evidence="9" ref="1">
    <original>E</original>
    <variation>D</variation>
    <location>
        <position position="301"/>
    </location>
</feature>
<feature type="sequence conflict" description="In Ref. 1; CAB05391/CAB05392, 2; CAB10407/CAB46035 and 3; CAB78670/CAB78671." evidence="9" ref="1 2 3">
    <original>S</original>
    <variation>P</variation>
    <location>
        <position position="362"/>
    </location>
</feature>
<feature type="sequence conflict" description="In Ref. 1; CAB05391." evidence="9" ref="1">
    <original>Q</original>
    <variation>P</variation>
    <location>
        <position position="732"/>
    </location>
</feature>
<accession>O04425</accession>
<accession>F4JLR8</accession>
<accession>F4JLR9</accession>
<accession>O04424</accession>
<accession>O04727</accession>
<accession>O23475</accession>